<feature type="transit peptide" description="Mitochondrion" evidence="2">
    <location>
        <begin position="1"/>
        <end position="28"/>
    </location>
</feature>
<feature type="chain" id="PRO_0000356274" description="Acetyl-CoA acetyltransferase, mitochondrial">
    <location>
        <begin position="29"/>
        <end position="422"/>
    </location>
</feature>
<feature type="active site" description="Acyl-thioester intermediate" evidence="3">
    <location>
        <position position="121"/>
    </location>
</feature>
<feature type="active site" description="Proton donor/acceptor" evidence="3">
    <location>
        <position position="408"/>
    </location>
</feature>
<feature type="binding site" evidence="3">
    <location>
        <position position="214"/>
    </location>
    <ligand>
        <name>CoA</name>
        <dbReference type="ChEBI" id="CHEBI:57287"/>
    </ligand>
</feature>
<feature type="binding site" evidence="3">
    <location>
        <position position="214"/>
    </location>
    <ligand>
        <name>K(+)</name>
        <dbReference type="ChEBI" id="CHEBI:29103"/>
    </ligand>
</feature>
<feature type="binding site" evidence="3">
    <location>
        <begin position="253"/>
        <end position="255"/>
    </location>
    <ligand>
        <name>CoA</name>
        <dbReference type="ChEBI" id="CHEBI:57287"/>
    </ligand>
</feature>
<feature type="binding site" evidence="3">
    <location>
        <position position="258"/>
    </location>
    <ligand>
        <name>CoA</name>
        <dbReference type="ChEBI" id="CHEBI:57287"/>
    </ligand>
</feature>
<feature type="binding site" evidence="3">
    <location>
        <position position="275"/>
    </location>
    <ligand>
        <name>K(+)</name>
        <dbReference type="ChEBI" id="CHEBI:29103"/>
    </ligand>
</feature>
<feature type="binding site" evidence="3">
    <location>
        <position position="276"/>
    </location>
    <ligand>
        <name>K(+)</name>
        <dbReference type="ChEBI" id="CHEBI:29103"/>
    </ligand>
</feature>
<feature type="binding site" evidence="3">
    <location>
        <position position="278"/>
    </location>
    <ligand>
        <name>K(+)</name>
        <dbReference type="ChEBI" id="CHEBI:29103"/>
    </ligand>
</feature>
<feature type="binding site" evidence="3">
    <location>
        <position position="279"/>
    </location>
    <ligand>
        <name>CoA</name>
        <dbReference type="ChEBI" id="CHEBI:57287"/>
    </ligand>
</feature>
<feature type="binding site" evidence="3">
    <location>
        <position position="376"/>
    </location>
    <ligand>
        <name>K(+)</name>
        <dbReference type="ChEBI" id="CHEBI:29103"/>
    </ligand>
</feature>
<feature type="site" description="Increases nucleophilicity of active site Cys" evidence="3">
    <location>
        <position position="380"/>
    </location>
</feature>
<feature type="modified residue" description="N6-acetyllysine; alternate" evidence="4">
    <location>
        <position position="61"/>
    </location>
</feature>
<feature type="modified residue" description="N6-succinyllysine; alternate" evidence="4">
    <location>
        <position position="61"/>
    </location>
</feature>
<feature type="modified residue" description="N6-succinyllysine" evidence="4">
    <location>
        <position position="73"/>
    </location>
</feature>
<feature type="modified residue" description="N6-acetyllysine; alternate" evidence="3">
    <location>
        <position position="169"/>
    </location>
</feature>
<feature type="modified residue" description="N6-succinyllysine; alternate" evidence="4">
    <location>
        <position position="169"/>
    </location>
</feature>
<feature type="modified residue" description="N6-acetyllysine; alternate" evidence="3">
    <location>
        <position position="176"/>
    </location>
</feature>
<feature type="modified residue" description="N6-succinyllysine; alternate" evidence="4">
    <location>
        <position position="176"/>
    </location>
</feature>
<feature type="modified residue" description="N6-acetyllysine; alternate" evidence="4">
    <location>
        <position position="185"/>
    </location>
</feature>
<feature type="modified residue" description="N6-succinyllysine; alternate" evidence="4">
    <location>
        <position position="185"/>
    </location>
</feature>
<feature type="modified residue" description="N6-acetyllysine; alternate" evidence="4">
    <location>
        <position position="197"/>
    </location>
</feature>
<feature type="modified residue" description="N6-succinyllysine; alternate" evidence="4">
    <location>
        <position position="197"/>
    </location>
</feature>
<feature type="modified residue" description="N6-acetyllysine; alternate" evidence="4">
    <location>
        <position position="218"/>
    </location>
</feature>
<feature type="modified residue" description="N6-succinyllysine; alternate" evidence="4">
    <location>
        <position position="218"/>
    </location>
</feature>
<feature type="modified residue" description="N6-succinyllysine" evidence="4">
    <location>
        <position position="238"/>
    </location>
</feature>
<feature type="modified residue" description="N6-acetyllysine; alternate" evidence="4">
    <location>
        <position position="240"/>
    </location>
</feature>
<feature type="modified residue" description="N6-succinyllysine; alternate" evidence="4">
    <location>
        <position position="240"/>
    </location>
</feature>
<feature type="modified residue" description="N6-acetyllysine" evidence="3">
    <location>
        <position position="246"/>
    </location>
</feature>
<feature type="modified residue" description="N6-acetyllysine" evidence="4">
    <location>
        <position position="252"/>
    </location>
</feature>
<feature type="modified residue" description="N6-acetyllysine; alternate" evidence="3">
    <location>
        <position position="258"/>
    </location>
</feature>
<feature type="modified residue" description="N6-succinyllysine; alternate" evidence="4">
    <location>
        <position position="258"/>
    </location>
</feature>
<feature type="modified residue" description="N6-succinyllysine" evidence="4">
    <location>
        <position position="261"/>
    </location>
</feature>
<feature type="modified residue" description="N6-succinyllysine" evidence="4">
    <location>
        <position position="263"/>
    </location>
</feature>
<feature type="modified residue" description="N6-acetyllysine" evidence="4">
    <location>
        <position position="333"/>
    </location>
</feature>
<proteinExistence type="evidence at transcript level"/>
<reference key="1">
    <citation type="submission" date="2006-02" db="EMBL/GenBank/DDBJ databases">
        <authorList>
            <consortium name="NIH - Mammalian Gene Collection (MGC) project"/>
        </authorList>
    </citation>
    <scope>NUCLEOTIDE SEQUENCE [LARGE SCALE MRNA]</scope>
    <source>
        <strain>Hereford</strain>
        <tissue>Uterus</tissue>
    </source>
</reference>
<comment type="function">
    <text evidence="3">This is one of the enzymes that catalyzes the last step of the mitochondrial beta-oxidation pathway, an aerobic process breaking down fatty acids into acetyl-CoA. Using free coenzyme A/CoA, catalyzes the thiolytic cleavage of medium- to long-chain 3-oxoacyl-CoAs into acetyl-CoA and a fatty acyl-CoA shortened by two carbon atoms. The activity of the enzyme is reversible and it can also catalyze the condensation of two acetyl-CoA molecules into acetoacetyl-CoA. Thereby, it plays a major role in ketone body metabolism.</text>
</comment>
<comment type="catalytic activity">
    <reaction evidence="5">
        <text>2 acetyl-CoA = acetoacetyl-CoA + CoA</text>
        <dbReference type="Rhea" id="RHEA:21036"/>
        <dbReference type="ChEBI" id="CHEBI:57286"/>
        <dbReference type="ChEBI" id="CHEBI:57287"/>
        <dbReference type="ChEBI" id="CHEBI:57288"/>
        <dbReference type="EC" id="2.3.1.9"/>
    </reaction>
    <physiologicalReaction direction="left-to-right" evidence="3">
        <dbReference type="Rhea" id="RHEA:21037"/>
    </physiologicalReaction>
    <physiologicalReaction direction="right-to-left" evidence="3">
        <dbReference type="Rhea" id="RHEA:21038"/>
    </physiologicalReaction>
</comment>
<comment type="catalytic activity">
    <reaction evidence="3">
        <text>propanoyl-CoA + acetyl-CoA = 2-methyl-3-oxobutanoyl-CoA + CoA</text>
        <dbReference type="Rhea" id="RHEA:30719"/>
        <dbReference type="ChEBI" id="CHEBI:57287"/>
        <dbReference type="ChEBI" id="CHEBI:57288"/>
        <dbReference type="ChEBI" id="CHEBI:57335"/>
        <dbReference type="ChEBI" id="CHEBI:57392"/>
    </reaction>
    <physiologicalReaction direction="left-to-right" evidence="3">
        <dbReference type="Rhea" id="RHEA:30720"/>
    </physiologicalReaction>
    <physiologicalReaction direction="right-to-left" evidence="3">
        <dbReference type="Rhea" id="RHEA:30721"/>
    </physiologicalReaction>
</comment>
<comment type="activity regulation">
    <text evidence="3">Activated by potassium ions, but not sodium ions.</text>
</comment>
<comment type="pathway">
    <text evidence="3">Lipid metabolism; fatty acid beta-oxidation.</text>
</comment>
<comment type="subunit">
    <text evidence="3">Homotetramer.</text>
</comment>
<comment type="subcellular location">
    <subcellularLocation>
        <location evidence="3">Mitochondrion</location>
    </subcellularLocation>
</comment>
<comment type="PTM">
    <text evidence="1">Succinylation at Lys-263, adjacent to a coenzyme A binding site. Desuccinylated by SIRT5 (By similarity).</text>
</comment>
<comment type="similarity">
    <text evidence="6">Belongs to the thiolase-like superfamily. Thiolase family.</text>
</comment>
<evidence type="ECO:0000250" key="1"/>
<evidence type="ECO:0000250" key="2">
    <source>
        <dbReference type="UniProtKB" id="P17764"/>
    </source>
</evidence>
<evidence type="ECO:0000250" key="3">
    <source>
        <dbReference type="UniProtKB" id="P24752"/>
    </source>
</evidence>
<evidence type="ECO:0000250" key="4">
    <source>
        <dbReference type="UniProtKB" id="Q8QZT1"/>
    </source>
</evidence>
<evidence type="ECO:0000255" key="5">
    <source>
        <dbReference type="PROSITE-ProRule" id="PRU10020"/>
    </source>
</evidence>
<evidence type="ECO:0000305" key="6"/>
<organism>
    <name type="scientific">Bos taurus</name>
    <name type="common">Bovine</name>
    <dbReference type="NCBI Taxonomy" id="9913"/>
    <lineage>
        <taxon>Eukaryota</taxon>
        <taxon>Metazoa</taxon>
        <taxon>Chordata</taxon>
        <taxon>Craniata</taxon>
        <taxon>Vertebrata</taxon>
        <taxon>Euteleostomi</taxon>
        <taxon>Mammalia</taxon>
        <taxon>Eutheria</taxon>
        <taxon>Laurasiatheria</taxon>
        <taxon>Artiodactyla</taxon>
        <taxon>Ruminantia</taxon>
        <taxon>Pecora</taxon>
        <taxon>Bovidae</taxon>
        <taxon>Bovinae</taxon>
        <taxon>Bos</taxon>
    </lineage>
</organism>
<keyword id="KW-0007">Acetylation</keyword>
<keyword id="KW-0012">Acyltransferase</keyword>
<keyword id="KW-0276">Fatty acid metabolism</keyword>
<keyword id="KW-0443">Lipid metabolism</keyword>
<keyword id="KW-0479">Metal-binding</keyword>
<keyword id="KW-0496">Mitochondrion</keyword>
<keyword id="KW-0630">Potassium</keyword>
<keyword id="KW-1185">Reference proteome</keyword>
<keyword id="KW-0808">Transferase</keyword>
<keyword id="KW-0809">Transit peptide</keyword>
<protein>
    <recommendedName>
        <fullName>Acetyl-CoA acetyltransferase, mitochondrial</fullName>
        <ecNumber evidence="3">2.3.1.9</ecNumber>
    </recommendedName>
    <alternativeName>
        <fullName>Acetoacetyl-CoA thiolase</fullName>
    </alternativeName>
</protein>
<sequence length="422" mass="44889">MPVLAALLRRGPLLQRRVQEIRYAERSYVSKPTLNEVVIVSAIRTPIGSFLGSLSSLPATKLGSIAIQGAIEKAGIPKEEVKEAYMGNVLQGGEGQAPTRQAVLGAGLPISTPCTTINKVCASGMKAIMMASQNLMCGHQDVMVAGGMESMSNVPYVMNRGATPYGGVKLEDLIVKDGLTDVYNKIHMGNCAENTAKKLNITREEQDTYALNSYTRSKAAWEAGRFGNEVVPVTITVKGKPDVVVKEDEEYKRVDFSKIPKLKTVFQRENGTVTAANASTLNDGAAAVVLMTADAAKRLNVKPLARIAAFADAAVEPIDFPLAPAYAVPKVLKDAGLKKEDITMWEVNEAFSVVVLANIKMLEMDPQKVNINGGAVSLGHPIGMSGARIVVHLAHALKQGEYGLASICNGGGGASAMLIQKL</sequence>
<accession>Q29RZ0</accession>
<gene>
    <name type="primary">ACAT1</name>
</gene>
<name>THIL_BOVIN</name>
<dbReference type="EC" id="2.3.1.9" evidence="3"/>
<dbReference type="EMBL" id="BC113328">
    <property type="protein sequence ID" value="AAI13329.1"/>
    <property type="molecule type" value="mRNA"/>
</dbReference>
<dbReference type="RefSeq" id="NP_001039540.1">
    <property type="nucleotide sequence ID" value="NM_001046075.1"/>
</dbReference>
<dbReference type="SMR" id="Q29RZ0"/>
<dbReference type="FunCoup" id="Q29RZ0">
    <property type="interactions" value="2024"/>
</dbReference>
<dbReference type="IntAct" id="Q29RZ0">
    <property type="interactions" value="1"/>
</dbReference>
<dbReference type="STRING" id="9913.ENSBTAP00000017122"/>
<dbReference type="SwissPalm" id="Q29RZ0"/>
<dbReference type="PaxDb" id="9913-ENSBTAP00000017122"/>
<dbReference type="PeptideAtlas" id="Q29RZ0"/>
<dbReference type="GeneID" id="511082"/>
<dbReference type="KEGG" id="bta:511082"/>
<dbReference type="CTD" id="38"/>
<dbReference type="VEuPathDB" id="HostDB:ENSBTAG00000012885"/>
<dbReference type="eggNOG" id="KOG1390">
    <property type="taxonomic scope" value="Eukaryota"/>
</dbReference>
<dbReference type="HOGENOM" id="CLU_031026_0_1_1"/>
<dbReference type="InParanoid" id="Q29RZ0"/>
<dbReference type="OMA" id="SMGTFGE"/>
<dbReference type="OrthoDB" id="5404651at2759"/>
<dbReference type="TreeFam" id="TF300650"/>
<dbReference type="Reactome" id="R-BTA-70895">
    <property type="pathway name" value="Branched-chain amino acid catabolism"/>
</dbReference>
<dbReference type="Reactome" id="R-BTA-77108">
    <property type="pathway name" value="Utilization of Ketone Bodies"/>
</dbReference>
<dbReference type="Reactome" id="R-BTA-77111">
    <property type="pathway name" value="Synthesis of Ketone Bodies"/>
</dbReference>
<dbReference type="Reactome" id="R-BTA-9837999">
    <property type="pathway name" value="Mitochondrial protein degradation"/>
</dbReference>
<dbReference type="Reactome" id="R-BTA-9854311">
    <property type="pathway name" value="Maturation of TCA enzymes and regulation of TCA cycle"/>
</dbReference>
<dbReference type="UniPathway" id="UPA00659"/>
<dbReference type="Proteomes" id="UP000009136">
    <property type="component" value="Chromosome 15"/>
</dbReference>
<dbReference type="Bgee" id="ENSBTAG00000012885">
    <property type="expression patterns" value="Expressed in metanephros cortex and 107 other cell types or tissues"/>
</dbReference>
<dbReference type="GO" id="GO:0005739">
    <property type="term" value="C:mitochondrion"/>
    <property type="evidence" value="ECO:0000318"/>
    <property type="project" value="GO_Central"/>
</dbReference>
<dbReference type="GO" id="GO:0003985">
    <property type="term" value="F:acetyl-CoA C-acetyltransferase activity"/>
    <property type="evidence" value="ECO:0000318"/>
    <property type="project" value="GO_Central"/>
</dbReference>
<dbReference type="GO" id="GO:0046872">
    <property type="term" value="F:metal ion binding"/>
    <property type="evidence" value="ECO:0007669"/>
    <property type="project" value="UniProtKB-KW"/>
</dbReference>
<dbReference type="GO" id="GO:0006635">
    <property type="term" value="P:fatty acid beta-oxidation"/>
    <property type="evidence" value="ECO:0007669"/>
    <property type="project" value="UniProtKB-UniPathway"/>
</dbReference>
<dbReference type="CDD" id="cd00751">
    <property type="entry name" value="thiolase"/>
    <property type="match status" value="1"/>
</dbReference>
<dbReference type="FunFam" id="3.40.47.10:FF:000007">
    <property type="entry name" value="acetyl-CoA acetyltransferase, mitochondrial"/>
    <property type="match status" value="1"/>
</dbReference>
<dbReference type="Gene3D" id="3.40.47.10">
    <property type="match status" value="1"/>
</dbReference>
<dbReference type="InterPro" id="IPR002155">
    <property type="entry name" value="Thiolase"/>
</dbReference>
<dbReference type="InterPro" id="IPR016039">
    <property type="entry name" value="Thiolase-like"/>
</dbReference>
<dbReference type="InterPro" id="IPR020615">
    <property type="entry name" value="Thiolase_acyl_enz_int_AS"/>
</dbReference>
<dbReference type="InterPro" id="IPR020610">
    <property type="entry name" value="Thiolase_AS"/>
</dbReference>
<dbReference type="InterPro" id="IPR020617">
    <property type="entry name" value="Thiolase_C"/>
</dbReference>
<dbReference type="InterPro" id="IPR020613">
    <property type="entry name" value="Thiolase_CS"/>
</dbReference>
<dbReference type="InterPro" id="IPR020616">
    <property type="entry name" value="Thiolase_N"/>
</dbReference>
<dbReference type="NCBIfam" id="TIGR01930">
    <property type="entry name" value="AcCoA-C-Actrans"/>
    <property type="match status" value="1"/>
</dbReference>
<dbReference type="PANTHER" id="PTHR18919:SF156">
    <property type="entry name" value="ACETYL-COA ACETYLTRANSFERASE, MITOCHONDRIAL"/>
    <property type="match status" value="1"/>
</dbReference>
<dbReference type="PANTHER" id="PTHR18919">
    <property type="entry name" value="ACETYL-COA C-ACYLTRANSFERASE"/>
    <property type="match status" value="1"/>
</dbReference>
<dbReference type="Pfam" id="PF02803">
    <property type="entry name" value="Thiolase_C"/>
    <property type="match status" value="1"/>
</dbReference>
<dbReference type="Pfam" id="PF00108">
    <property type="entry name" value="Thiolase_N"/>
    <property type="match status" value="1"/>
</dbReference>
<dbReference type="PIRSF" id="PIRSF000429">
    <property type="entry name" value="Ac-CoA_Ac_transf"/>
    <property type="match status" value="1"/>
</dbReference>
<dbReference type="SUPFAM" id="SSF53901">
    <property type="entry name" value="Thiolase-like"/>
    <property type="match status" value="2"/>
</dbReference>
<dbReference type="PROSITE" id="PS00098">
    <property type="entry name" value="THIOLASE_1"/>
    <property type="match status" value="1"/>
</dbReference>
<dbReference type="PROSITE" id="PS00737">
    <property type="entry name" value="THIOLASE_2"/>
    <property type="match status" value="1"/>
</dbReference>
<dbReference type="PROSITE" id="PS00099">
    <property type="entry name" value="THIOLASE_3"/>
    <property type="match status" value="1"/>
</dbReference>